<proteinExistence type="evidence at protein level"/>
<protein>
    <recommendedName>
        <fullName evidence="1">Probable endonuclease 4</fullName>
        <ecNumber evidence="1">3.1.21.2</ecNumber>
    </recommendedName>
    <alternativeName>
        <fullName evidence="1">Endodeoxyribonuclease IV</fullName>
    </alternativeName>
    <alternativeName>
        <fullName evidence="1">Endonuclease IV</fullName>
    </alternativeName>
</protein>
<evidence type="ECO:0000255" key="1">
    <source>
        <dbReference type="HAMAP-Rule" id="MF_00152"/>
    </source>
</evidence>
<evidence type="ECO:0007829" key="2">
    <source>
        <dbReference type="PDB" id="1XP3"/>
    </source>
</evidence>
<gene>
    <name evidence="1" type="primary">nfo</name>
    <name type="ordered locus">BA_4508</name>
    <name type="ordered locus">GBAA_4508</name>
    <name type="ordered locus">BAS4186</name>
</gene>
<reference key="1">
    <citation type="journal article" date="2003" name="Nature">
        <title>The genome sequence of Bacillus anthracis Ames and comparison to closely related bacteria.</title>
        <authorList>
            <person name="Read T.D."/>
            <person name="Peterson S.N."/>
            <person name="Tourasse N.J."/>
            <person name="Baillie L.W."/>
            <person name="Paulsen I.T."/>
            <person name="Nelson K.E."/>
            <person name="Tettelin H."/>
            <person name="Fouts D.E."/>
            <person name="Eisen J.A."/>
            <person name="Gill S.R."/>
            <person name="Holtzapple E.K."/>
            <person name="Okstad O.A."/>
            <person name="Helgason E."/>
            <person name="Rilstone J."/>
            <person name="Wu M."/>
            <person name="Kolonay J.F."/>
            <person name="Beanan M.J."/>
            <person name="Dodson R.J."/>
            <person name="Brinkac L.M."/>
            <person name="Gwinn M.L."/>
            <person name="DeBoy R.T."/>
            <person name="Madpu R."/>
            <person name="Daugherty S.C."/>
            <person name="Durkin A.S."/>
            <person name="Haft D.H."/>
            <person name="Nelson W.C."/>
            <person name="Peterson J.D."/>
            <person name="Pop M."/>
            <person name="Khouri H.M."/>
            <person name="Radune D."/>
            <person name="Benton J.L."/>
            <person name="Mahamoud Y."/>
            <person name="Jiang L."/>
            <person name="Hance I.R."/>
            <person name="Weidman J.F."/>
            <person name="Berry K.J."/>
            <person name="Plaut R.D."/>
            <person name="Wolf A.M."/>
            <person name="Watkins K.L."/>
            <person name="Nierman W.C."/>
            <person name="Hazen A."/>
            <person name="Cline R.T."/>
            <person name="Redmond C."/>
            <person name="Thwaite J.E."/>
            <person name="White O."/>
            <person name="Salzberg S.L."/>
            <person name="Thomason B."/>
            <person name="Friedlander A.M."/>
            <person name="Koehler T.M."/>
            <person name="Hanna P.C."/>
            <person name="Kolstoe A.-B."/>
            <person name="Fraser C.M."/>
        </authorList>
    </citation>
    <scope>NUCLEOTIDE SEQUENCE [LARGE SCALE GENOMIC DNA]</scope>
    <source>
        <strain>Ames / isolate Porton</strain>
    </source>
</reference>
<reference key="2">
    <citation type="journal article" date="2009" name="J. Bacteriol.">
        <title>The complete genome sequence of Bacillus anthracis Ames 'Ancestor'.</title>
        <authorList>
            <person name="Ravel J."/>
            <person name="Jiang L."/>
            <person name="Stanley S.T."/>
            <person name="Wilson M.R."/>
            <person name="Decker R.S."/>
            <person name="Read T.D."/>
            <person name="Worsham P."/>
            <person name="Keim P.S."/>
            <person name="Salzberg S.L."/>
            <person name="Fraser-Liggett C.M."/>
            <person name="Rasko D.A."/>
        </authorList>
    </citation>
    <scope>NUCLEOTIDE SEQUENCE [LARGE SCALE GENOMIC DNA]</scope>
    <source>
        <strain>Ames ancestor</strain>
    </source>
</reference>
<reference key="3">
    <citation type="submission" date="2004-01" db="EMBL/GenBank/DDBJ databases">
        <title>Complete genome sequence of Bacillus anthracis Sterne.</title>
        <authorList>
            <person name="Brettin T.S."/>
            <person name="Bruce D."/>
            <person name="Challacombe J.F."/>
            <person name="Gilna P."/>
            <person name="Han C."/>
            <person name="Hill K."/>
            <person name="Hitchcock P."/>
            <person name="Jackson P."/>
            <person name="Keim P."/>
            <person name="Longmire J."/>
            <person name="Lucas S."/>
            <person name="Okinaka R."/>
            <person name="Richardson P."/>
            <person name="Rubin E."/>
            <person name="Tice H."/>
        </authorList>
    </citation>
    <scope>NUCLEOTIDE SEQUENCE [LARGE SCALE GENOMIC DNA]</scope>
    <source>
        <strain>Sterne</strain>
    </source>
</reference>
<organism>
    <name type="scientific">Bacillus anthracis</name>
    <dbReference type="NCBI Taxonomy" id="1392"/>
    <lineage>
        <taxon>Bacteria</taxon>
        <taxon>Bacillati</taxon>
        <taxon>Bacillota</taxon>
        <taxon>Bacilli</taxon>
        <taxon>Bacillales</taxon>
        <taxon>Bacillaceae</taxon>
        <taxon>Bacillus</taxon>
        <taxon>Bacillus cereus group</taxon>
    </lineage>
</organism>
<accession>Q81LV1</accession>
<accession>Q6HTA3</accession>
<accession>Q6KMJ5</accession>
<dbReference type="EC" id="3.1.21.2" evidence="1"/>
<dbReference type="EMBL" id="AE016879">
    <property type="protein sequence ID" value="AAP28219.1"/>
    <property type="molecule type" value="Genomic_DNA"/>
</dbReference>
<dbReference type="EMBL" id="AE017334">
    <property type="protein sequence ID" value="AAT33627.1"/>
    <property type="molecule type" value="Genomic_DNA"/>
</dbReference>
<dbReference type="EMBL" id="AE017225">
    <property type="protein sequence ID" value="AAT56486.1"/>
    <property type="molecule type" value="Genomic_DNA"/>
</dbReference>
<dbReference type="RefSeq" id="NP_846733.1">
    <property type="nucleotide sequence ID" value="NC_003997.3"/>
</dbReference>
<dbReference type="RefSeq" id="WP_000912468.1">
    <property type="nucleotide sequence ID" value="NZ_WXXJ01000027.1"/>
</dbReference>
<dbReference type="RefSeq" id="YP_030435.1">
    <property type="nucleotide sequence ID" value="NC_005945.1"/>
</dbReference>
<dbReference type="PDB" id="1XP3">
    <property type="method" value="X-ray"/>
    <property type="resolution" value="2.57 A"/>
    <property type="chains" value="A=1-298"/>
</dbReference>
<dbReference type="PDBsum" id="1XP3"/>
<dbReference type="SMR" id="Q81LV1"/>
<dbReference type="STRING" id="261594.GBAA_4508"/>
<dbReference type="DNASU" id="1088232"/>
<dbReference type="GeneID" id="45024164"/>
<dbReference type="KEGG" id="ban:BA_4508"/>
<dbReference type="KEGG" id="banh:HYU01_22010"/>
<dbReference type="KEGG" id="bar:GBAA_4508"/>
<dbReference type="KEGG" id="bat:BAS4186"/>
<dbReference type="PATRIC" id="fig|198094.11.peg.4476"/>
<dbReference type="eggNOG" id="COG0648">
    <property type="taxonomic scope" value="Bacteria"/>
</dbReference>
<dbReference type="HOGENOM" id="CLU_025885_4_1_9"/>
<dbReference type="OMA" id="HPGSHLR"/>
<dbReference type="OrthoDB" id="9805666at2"/>
<dbReference type="EvolutionaryTrace" id="Q81LV1"/>
<dbReference type="Proteomes" id="UP000000427">
    <property type="component" value="Chromosome"/>
</dbReference>
<dbReference type="Proteomes" id="UP000000594">
    <property type="component" value="Chromosome"/>
</dbReference>
<dbReference type="GO" id="GO:0008833">
    <property type="term" value="F:deoxyribonuclease IV (phage-T4-induced) activity"/>
    <property type="evidence" value="ECO:0007669"/>
    <property type="project" value="UniProtKB-UniRule"/>
</dbReference>
<dbReference type="GO" id="GO:0003677">
    <property type="term" value="F:DNA binding"/>
    <property type="evidence" value="ECO:0007669"/>
    <property type="project" value="InterPro"/>
</dbReference>
<dbReference type="GO" id="GO:0003906">
    <property type="term" value="F:DNA-(apurinic or apyrimidinic site) endonuclease activity"/>
    <property type="evidence" value="ECO:0007669"/>
    <property type="project" value="TreeGrafter"/>
</dbReference>
<dbReference type="GO" id="GO:0008081">
    <property type="term" value="F:phosphoric diester hydrolase activity"/>
    <property type="evidence" value="ECO:0007669"/>
    <property type="project" value="TreeGrafter"/>
</dbReference>
<dbReference type="GO" id="GO:0008270">
    <property type="term" value="F:zinc ion binding"/>
    <property type="evidence" value="ECO:0007669"/>
    <property type="project" value="UniProtKB-UniRule"/>
</dbReference>
<dbReference type="GO" id="GO:0006284">
    <property type="term" value="P:base-excision repair"/>
    <property type="evidence" value="ECO:0007669"/>
    <property type="project" value="TreeGrafter"/>
</dbReference>
<dbReference type="CDD" id="cd00019">
    <property type="entry name" value="AP2Ec"/>
    <property type="match status" value="1"/>
</dbReference>
<dbReference type="FunFam" id="3.20.20.150:FF:000001">
    <property type="entry name" value="Probable endonuclease 4"/>
    <property type="match status" value="1"/>
</dbReference>
<dbReference type="Gene3D" id="3.20.20.150">
    <property type="entry name" value="Divalent-metal-dependent TIM barrel enzymes"/>
    <property type="match status" value="1"/>
</dbReference>
<dbReference type="HAMAP" id="MF_00152">
    <property type="entry name" value="Nfo"/>
    <property type="match status" value="1"/>
</dbReference>
<dbReference type="InterPro" id="IPR001719">
    <property type="entry name" value="AP_endonuc_2"/>
</dbReference>
<dbReference type="InterPro" id="IPR018246">
    <property type="entry name" value="AP_endonuc_F2_Zn_BS"/>
</dbReference>
<dbReference type="InterPro" id="IPR036237">
    <property type="entry name" value="Xyl_isomerase-like_sf"/>
</dbReference>
<dbReference type="InterPro" id="IPR013022">
    <property type="entry name" value="Xyl_isomerase-like_TIM-brl"/>
</dbReference>
<dbReference type="NCBIfam" id="TIGR00587">
    <property type="entry name" value="nfo"/>
    <property type="match status" value="1"/>
</dbReference>
<dbReference type="NCBIfam" id="NF002196">
    <property type="entry name" value="PRK01060.1-1"/>
    <property type="match status" value="1"/>
</dbReference>
<dbReference type="PANTHER" id="PTHR21445:SF0">
    <property type="entry name" value="APURINIC-APYRIMIDINIC ENDONUCLEASE"/>
    <property type="match status" value="1"/>
</dbReference>
<dbReference type="PANTHER" id="PTHR21445">
    <property type="entry name" value="ENDONUCLEASE IV ENDODEOXYRIBONUCLEASE IV"/>
    <property type="match status" value="1"/>
</dbReference>
<dbReference type="Pfam" id="PF01261">
    <property type="entry name" value="AP_endonuc_2"/>
    <property type="match status" value="1"/>
</dbReference>
<dbReference type="SMART" id="SM00518">
    <property type="entry name" value="AP2Ec"/>
    <property type="match status" value="1"/>
</dbReference>
<dbReference type="SUPFAM" id="SSF51658">
    <property type="entry name" value="Xylose isomerase-like"/>
    <property type="match status" value="1"/>
</dbReference>
<dbReference type="PROSITE" id="PS00729">
    <property type="entry name" value="AP_NUCLEASE_F2_1"/>
    <property type="match status" value="1"/>
</dbReference>
<dbReference type="PROSITE" id="PS00730">
    <property type="entry name" value="AP_NUCLEASE_F2_2"/>
    <property type="match status" value="1"/>
</dbReference>
<dbReference type="PROSITE" id="PS00731">
    <property type="entry name" value="AP_NUCLEASE_F2_3"/>
    <property type="match status" value="1"/>
</dbReference>
<dbReference type="PROSITE" id="PS51432">
    <property type="entry name" value="AP_NUCLEASE_F2_4"/>
    <property type="match status" value="1"/>
</dbReference>
<feature type="chain" id="PRO_0000190819" description="Probable endonuclease 4">
    <location>
        <begin position="1"/>
        <end position="298"/>
    </location>
</feature>
<feature type="binding site" evidence="1">
    <location>
        <position position="69"/>
    </location>
    <ligand>
        <name>Zn(2+)</name>
        <dbReference type="ChEBI" id="CHEBI:29105"/>
        <label>1</label>
    </ligand>
</feature>
<feature type="binding site" evidence="1">
    <location>
        <position position="111"/>
    </location>
    <ligand>
        <name>Zn(2+)</name>
        <dbReference type="ChEBI" id="CHEBI:29105"/>
        <label>1</label>
    </ligand>
</feature>
<feature type="binding site" evidence="1">
    <location>
        <position position="146"/>
    </location>
    <ligand>
        <name>Zn(2+)</name>
        <dbReference type="ChEBI" id="CHEBI:29105"/>
        <label>1</label>
    </ligand>
</feature>
<feature type="binding site" evidence="1">
    <location>
        <position position="146"/>
    </location>
    <ligand>
        <name>Zn(2+)</name>
        <dbReference type="ChEBI" id="CHEBI:29105"/>
        <label>2</label>
    </ligand>
</feature>
<feature type="binding site" evidence="1">
    <location>
        <position position="180"/>
    </location>
    <ligand>
        <name>Zn(2+)</name>
        <dbReference type="ChEBI" id="CHEBI:29105"/>
        <label>2</label>
    </ligand>
</feature>
<feature type="binding site" evidence="1">
    <location>
        <position position="183"/>
    </location>
    <ligand>
        <name>Zn(2+)</name>
        <dbReference type="ChEBI" id="CHEBI:29105"/>
        <label>3</label>
    </ligand>
</feature>
<feature type="binding site" evidence="1">
    <location>
        <position position="215"/>
    </location>
    <ligand>
        <name>Zn(2+)</name>
        <dbReference type="ChEBI" id="CHEBI:29105"/>
        <label>2</label>
    </ligand>
</feature>
<feature type="binding site" evidence="1">
    <location>
        <position position="228"/>
    </location>
    <ligand>
        <name>Zn(2+)</name>
        <dbReference type="ChEBI" id="CHEBI:29105"/>
        <label>3</label>
    </ligand>
</feature>
<feature type="binding site" evidence="1">
    <location>
        <position position="230"/>
    </location>
    <ligand>
        <name>Zn(2+)</name>
        <dbReference type="ChEBI" id="CHEBI:29105"/>
        <label>3</label>
    </ligand>
</feature>
<feature type="binding site" evidence="1">
    <location>
        <position position="260"/>
    </location>
    <ligand>
        <name>Zn(2+)</name>
        <dbReference type="ChEBI" id="CHEBI:29105"/>
        <label>2</label>
    </ligand>
</feature>
<feature type="strand" evidence="2">
    <location>
        <begin position="4"/>
        <end position="7"/>
    </location>
</feature>
<feature type="strand" evidence="2">
    <location>
        <begin position="12"/>
        <end position="14"/>
    </location>
</feature>
<feature type="helix" evidence="2">
    <location>
        <begin position="16"/>
        <end position="24"/>
    </location>
</feature>
<feature type="turn" evidence="2">
    <location>
        <begin position="25"/>
        <end position="27"/>
    </location>
</feature>
<feature type="strand" evidence="2">
    <location>
        <begin position="29"/>
        <end position="33"/>
    </location>
</feature>
<feature type="helix" evidence="2">
    <location>
        <begin position="46"/>
        <end position="49"/>
    </location>
</feature>
<feature type="helix" evidence="2">
    <location>
        <begin position="51"/>
        <end position="60"/>
    </location>
</feature>
<feature type="strand" evidence="2">
    <location>
        <begin position="66"/>
        <end position="69"/>
    </location>
</feature>
<feature type="helix" evidence="2">
    <location>
        <begin position="82"/>
        <end position="101"/>
    </location>
</feature>
<feature type="strand" evidence="2">
    <location>
        <begin position="102"/>
        <end position="104"/>
    </location>
</feature>
<feature type="strand" evidence="2">
    <location>
        <begin position="107"/>
        <end position="110"/>
    </location>
</feature>
<feature type="helix" evidence="2">
    <location>
        <begin position="120"/>
        <end position="134"/>
    </location>
</feature>
<feature type="strand" evidence="2">
    <location>
        <begin position="140"/>
        <end position="146"/>
    </location>
</feature>
<feature type="helix" evidence="2">
    <location>
        <begin position="159"/>
        <end position="168"/>
    </location>
</feature>
<feature type="helix" evidence="2">
    <location>
        <begin position="172"/>
        <end position="174"/>
    </location>
</feature>
<feature type="strand" evidence="2">
    <location>
        <begin position="175"/>
        <end position="180"/>
    </location>
</feature>
<feature type="helix" evidence="2">
    <location>
        <begin position="181"/>
        <end position="186"/>
    </location>
</feature>
<feature type="helix" evidence="2">
    <location>
        <begin position="191"/>
        <end position="205"/>
    </location>
</feature>
<feature type="helix" evidence="2">
    <location>
        <begin position="208"/>
        <end position="210"/>
    </location>
</feature>
<feature type="strand" evidence="2">
    <location>
        <begin position="211"/>
        <end position="216"/>
    </location>
</feature>
<feature type="strand" evidence="2">
    <location>
        <begin position="218"/>
        <end position="221"/>
    </location>
</feature>
<feature type="strand" evidence="2">
    <location>
        <begin position="235"/>
        <end position="238"/>
    </location>
</feature>
<feature type="helix" evidence="2">
    <location>
        <begin position="240"/>
        <end position="247"/>
    </location>
</feature>
<feature type="helix" evidence="2">
    <location>
        <begin position="250"/>
        <end position="252"/>
    </location>
</feature>
<feature type="strand" evidence="2">
    <location>
        <begin position="257"/>
        <end position="259"/>
    </location>
</feature>
<feature type="strand" evidence="2">
    <location>
        <begin position="267"/>
        <end position="269"/>
    </location>
</feature>
<feature type="helix" evidence="2">
    <location>
        <begin position="275"/>
        <end position="284"/>
    </location>
</feature>
<feature type="helix" evidence="2">
    <location>
        <begin position="291"/>
        <end position="296"/>
    </location>
</feature>
<comment type="function">
    <text evidence="1">Endonuclease IV plays a role in DNA repair. It cleaves phosphodiester bonds at apurinic or apyrimidinic (AP) sites, generating a 3'-hydroxyl group and a 5'-terminal sugar phosphate.</text>
</comment>
<comment type="catalytic activity">
    <reaction evidence="1">
        <text>Endonucleolytic cleavage to 5'-phosphooligonucleotide end-products.</text>
        <dbReference type="EC" id="3.1.21.2"/>
    </reaction>
</comment>
<comment type="cofactor">
    <cofactor evidence="1">
        <name>Zn(2+)</name>
        <dbReference type="ChEBI" id="CHEBI:29105"/>
    </cofactor>
    <text evidence="1">Binds 3 Zn(2+) ions.</text>
</comment>
<comment type="similarity">
    <text evidence="1">Belongs to the AP endonuclease 2 family.</text>
</comment>
<name>END4_BACAN</name>
<keyword id="KW-0002">3D-structure</keyword>
<keyword id="KW-0227">DNA damage</keyword>
<keyword id="KW-0234">DNA repair</keyword>
<keyword id="KW-0255">Endonuclease</keyword>
<keyword id="KW-0378">Hydrolase</keyword>
<keyword id="KW-0479">Metal-binding</keyword>
<keyword id="KW-0540">Nuclease</keyword>
<keyword id="KW-1185">Reference proteome</keyword>
<keyword id="KW-0862">Zinc</keyword>
<sequence>MLKIGSHVSMSGKKMLLAASEEAVSYGATTFMIYTGAPQNTRRKPIEELNIEAGRKHMEQNGIEEIIVHAPYIINVGNTTKPETFQLGVDFLRMEIERTSALGVAKQIVLHPGAHVGAGADAGIQQIIKGLNEVLTPDQTVNIALETMAGKGTECGRSFEEIAKIIDGVKYNEKLSVCFDTCHTHDAGYDIVNNFDGVLNEFDKIVGIDRLQVLHINDSKNVRGAGKDRHENIGFGHIGYKALHHIVHHPQLTHVPKILETPYVGEDKKDKKPPYKLEIEMLKNGTFDEGLLEKIKAQ</sequence>